<gene>
    <name type="ordered locus">jhp_0270</name>
</gene>
<accession>Q9ZMF0</accession>
<name>Y285_HELPJ</name>
<proteinExistence type="inferred from homology"/>
<reference key="1">
    <citation type="journal article" date="1999" name="Nature">
        <title>Genomic sequence comparison of two unrelated isolates of the human gastric pathogen Helicobacter pylori.</title>
        <authorList>
            <person name="Alm R.A."/>
            <person name="Ling L.-S.L."/>
            <person name="Moir D.T."/>
            <person name="King B.L."/>
            <person name="Brown E.D."/>
            <person name="Doig P.C."/>
            <person name="Smith D.R."/>
            <person name="Noonan B."/>
            <person name="Guild B.C."/>
            <person name="deJonge B.L."/>
            <person name="Carmel G."/>
            <person name="Tummino P.J."/>
            <person name="Caruso A."/>
            <person name="Uria-Nickelsen M."/>
            <person name="Mills D.M."/>
            <person name="Ives C."/>
            <person name="Gibson R."/>
            <person name="Merberg D."/>
            <person name="Mills S.D."/>
            <person name="Jiang Q."/>
            <person name="Taylor D.E."/>
            <person name="Vovis G.F."/>
            <person name="Trust T.J."/>
        </authorList>
    </citation>
    <scope>NUCLEOTIDE SEQUENCE [LARGE SCALE GENOMIC DNA]</scope>
    <source>
        <strain>J99 / ATCC 700824</strain>
    </source>
</reference>
<comment type="cofactor">
    <cofactor evidence="1">
        <name>[4Fe-4S] cluster</name>
        <dbReference type="ChEBI" id="CHEBI:49883"/>
    </cofactor>
    <text evidence="1">Binds 2 [4Fe-4S] clusters. One cluster is coordinated with 3 cysteines and an exchangeable S-adenosyl-L-methionine.</text>
</comment>
<comment type="similarity">
    <text evidence="3">Belongs to the methylthiotransferase family.</text>
</comment>
<organism>
    <name type="scientific">Helicobacter pylori (strain J99 / ATCC 700824)</name>
    <name type="common">Campylobacter pylori J99</name>
    <dbReference type="NCBI Taxonomy" id="85963"/>
    <lineage>
        <taxon>Bacteria</taxon>
        <taxon>Pseudomonadati</taxon>
        <taxon>Campylobacterota</taxon>
        <taxon>Epsilonproteobacteria</taxon>
        <taxon>Campylobacterales</taxon>
        <taxon>Helicobacteraceae</taxon>
        <taxon>Helicobacter</taxon>
    </lineage>
</organism>
<dbReference type="EC" id="2.-.-.-"/>
<dbReference type="EMBL" id="AE001439">
    <property type="protein sequence ID" value="AAD05851.1"/>
    <property type="molecule type" value="Genomic_DNA"/>
</dbReference>
<dbReference type="PIR" id="G71952">
    <property type="entry name" value="G71952"/>
</dbReference>
<dbReference type="RefSeq" id="WP_000758501.1">
    <property type="nucleotide sequence ID" value="NC_000921.1"/>
</dbReference>
<dbReference type="SMR" id="Q9ZMF0"/>
<dbReference type="KEGG" id="hpj:jhp_0270"/>
<dbReference type="eggNOG" id="COG0621">
    <property type="taxonomic scope" value="Bacteria"/>
</dbReference>
<dbReference type="Proteomes" id="UP000000804">
    <property type="component" value="Chromosome"/>
</dbReference>
<dbReference type="GO" id="GO:0051539">
    <property type="term" value="F:4 iron, 4 sulfur cluster binding"/>
    <property type="evidence" value="ECO:0007669"/>
    <property type="project" value="UniProtKB-KW"/>
</dbReference>
<dbReference type="GO" id="GO:0046872">
    <property type="term" value="F:metal ion binding"/>
    <property type="evidence" value="ECO:0007669"/>
    <property type="project" value="UniProtKB-KW"/>
</dbReference>
<dbReference type="GO" id="GO:0035598">
    <property type="term" value="F:N6-threonylcarbomyladenosine methylthiotransferase activity"/>
    <property type="evidence" value="ECO:0007669"/>
    <property type="project" value="TreeGrafter"/>
</dbReference>
<dbReference type="CDD" id="cd01335">
    <property type="entry name" value="Radical_SAM"/>
    <property type="match status" value="1"/>
</dbReference>
<dbReference type="FunFam" id="3.80.30.20:FF:000019">
    <property type="entry name" value="tRNA methylthiotransferase YqeV"/>
    <property type="match status" value="1"/>
</dbReference>
<dbReference type="Gene3D" id="3.40.50.12160">
    <property type="entry name" value="Methylthiotransferase, N-terminal domain"/>
    <property type="match status" value="1"/>
</dbReference>
<dbReference type="Gene3D" id="3.80.30.20">
    <property type="entry name" value="tm_1862 like domain"/>
    <property type="match status" value="1"/>
</dbReference>
<dbReference type="InterPro" id="IPR006638">
    <property type="entry name" value="Elp3/MiaA/NifB-like_rSAM"/>
</dbReference>
<dbReference type="InterPro" id="IPR005839">
    <property type="entry name" value="Methylthiotransferase"/>
</dbReference>
<dbReference type="InterPro" id="IPR020612">
    <property type="entry name" value="Methylthiotransferase_CS"/>
</dbReference>
<dbReference type="InterPro" id="IPR013848">
    <property type="entry name" value="Methylthiotransferase_N"/>
</dbReference>
<dbReference type="InterPro" id="IPR038135">
    <property type="entry name" value="Methylthiotransferase_N_sf"/>
</dbReference>
<dbReference type="InterPro" id="IPR006467">
    <property type="entry name" value="MiaB-like_bact"/>
</dbReference>
<dbReference type="InterPro" id="IPR007197">
    <property type="entry name" value="rSAM"/>
</dbReference>
<dbReference type="InterPro" id="IPR023404">
    <property type="entry name" value="rSAM_horseshoe"/>
</dbReference>
<dbReference type="NCBIfam" id="TIGR01579">
    <property type="entry name" value="MiaB-like-C"/>
    <property type="match status" value="1"/>
</dbReference>
<dbReference type="NCBIfam" id="TIGR00089">
    <property type="entry name" value="MiaB/RimO family radical SAM methylthiotransferase"/>
    <property type="match status" value="1"/>
</dbReference>
<dbReference type="PANTHER" id="PTHR11918">
    <property type="entry name" value="RADICAL SAM PROTEINS"/>
    <property type="match status" value="1"/>
</dbReference>
<dbReference type="PANTHER" id="PTHR11918:SF45">
    <property type="entry name" value="THREONYLCARBAMOYLADENOSINE TRNA METHYLTHIOTRANSFERASE"/>
    <property type="match status" value="1"/>
</dbReference>
<dbReference type="Pfam" id="PF04055">
    <property type="entry name" value="Radical_SAM"/>
    <property type="match status" value="1"/>
</dbReference>
<dbReference type="Pfam" id="PF00919">
    <property type="entry name" value="UPF0004"/>
    <property type="match status" value="1"/>
</dbReference>
<dbReference type="SFLD" id="SFLDG01082">
    <property type="entry name" value="B12-binding_domain_containing"/>
    <property type="match status" value="1"/>
</dbReference>
<dbReference type="SFLD" id="SFLDS00029">
    <property type="entry name" value="Radical_SAM"/>
    <property type="match status" value="1"/>
</dbReference>
<dbReference type="SMART" id="SM00729">
    <property type="entry name" value="Elp3"/>
    <property type="match status" value="1"/>
</dbReference>
<dbReference type="SUPFAM" id="SSF102114">
    <property type="entry name" value="Radical SAM enzymes"/>
    <property type="match status" value="1"/>
</dbReference>
<dbReference type="PROSITE" id="PS51449">
    <property type="entry name" value="MTTASE_N"/>
    <property type="match status" value="1"/>
</dbReference>
<dbReference type="PROSITE" id="PS01278">
    <property type="entry name" value="MTTASE_RADICAL"/>
    <property type="match status" value="1"/>
</dbReference>
<dbReference type="PROSITE" id="PS51918">
    <property type="entry name" value="RADICAL_SAM"/>
    <property type="match status" value="1"/>
</dbReference>
<evidence type="ECO:0000255" key="1">
    <source>
        <dbReference type="PROSITE-ProRule" id="PRU00780"/>
    </source>
</evidence>
<evidence type="ECO:0000255" key="2">
    <source>
        <dbReference type="PROSITE-ProRule" id="PRU01266"/>
    </source>
</evidence>
<evidence type="ECO:0000305" key="3"/>
<feature type="chain" id="PRO_0000141743" description="Putative methylthiotransferase jhp_0270">
    <location>
        <begin position="1"/>
        <end position="418"/>
    </location>
</feature>
<feature type="domain" description="MTTase N-terminal" evidence="1">
    <location>
        <begin position="2"/>
        <end position="110"/>
    </location>
</feature>
<feature type="domain" description="Radical SAM core" evidence="2">
    <location>
        <begin position="130"/>
        <end position="355"/>
    </location>
</feature>
<feature type="binding site" evidence="1">
    <location>
        <position position="11"/>
    </location>
    <ligand>
        <name>[4Fe-4S] cluster</name>
        <dbReference type="ChEBI" id="CHEBI:49883"/>
        <label>1</label>
    </ligand>
</feature>
<feature type="binding site" evidence="1">
    <location>
        <position position="45"/>
    </location>
    <ligand>
        <name>[4Fe-4S] cluster</name>
        <dbReference type="ChEBI" id="CHEBI:49883"/>
        <label>1</label>
    </ligand>
</feature>
<feature type="binding site" evidence="1">
    <location>
        <position position="74"/>
    </location>
    <ligand>
        <name>[4Fe-4S] cluster</name>
        <dbReference type="ChEBI" id="CHEBI:49883"/>
        <label>1</label>
    </ligand>
</feature>
<feature type="binding site" evidence="1">
    <location>
        <position position="144"/>
    </location>
    <ligand>
        <name>[4Fe-4S] cluster</name>
        <dbReference type="ChEBI" id="CHEBI:49883"/>
        <label>2</label>
        <note>4Fe-4S-S-AdoMet</note>
    </ligand>
</feature>
<feature type="binding site" evidence="1">
    <location>
        <position position="148"/>
    </location>
    <ligand>
        <name>[4Fe-4S] cluster</name>
        <dbReference type="ChEBI" id="CHEBI:49883"/>
        <label>2</label>
        <note>4Fe-4S-S-AdoMet</note>
    </ligand>
</feature>
<feature type="binding site" evidence="1">
    <location>
        <position position="151"/>
    </location>
    <ligand>
        <name>[4Fe-4S] cluster</name>
        <dbReference type="ChEBI" id="CHEBI:49883"/>
        <label>2</label>
        <note>4Fe-4S-S-AdoMet</note>
    </ligand>
</feature>
<protein>
    <recommendedName>
        <fullName>Putative methylthiotransferase jhp_0270</fullName>
        <ecNumber>2.-.-.-</ecNumber>
    </recommendedName>
</protein>
<keyword id="KW-0004">4Fe-4S</keyword>
<keyword id="KW-0408">Iron</keyword>
<keyword id="KW-0411">Iron-sulfur</keyword>
<keyword id="KW-0479">Metal-binding</keyword>
<keyword id="KW-0949">S-adenosyl-L-methionine</keyword>
<keyword id="KW-0808">Transferase</keyword>
<sequence>MKKVYFKTFGCRTNLFDTQVMGENLKDFSATLEEQEADIIIINSCTVTNGTDSAVRSYARKMARLDKEVLFTGCGVKTQGKELFEKGLLKGVFGHDNKEKINALLQEKKRFFIDDNLENKHLDTTMVSEFVGKTRAFIKIQEGCDFDCNYCIIPSVRGRARSFEERKILEQVGLLCSKGVQEVVLTGTNVGSYGKDRGSNIARLIKKLSQITGLKRIRIGSLEPNQINDEFLELLEEDFLEKHLHIALQHSHDFMLERMNRRNRTKSDRELLEIIASKNFAIGTDFIVGHPGESESVFEKAFKNLESLPLTHIHPFIYSKRKDTPSSLMRDSVSLEDSKKRLNAIKDLIFHKNKAFRQLQLKLNTPLKALVEAQKDGEFKALDQFFNPIKIKSDKPLRASFLEIKEYEIKERENHAVF</sequence>